<evidence type="ECO:0000250" key="1">
    <source>
        <dbReference type="UniProtKB" id="Q8CGN4"/>
    </source>
</evidence>
<evidence type="ECO:0000256" key="2">
    <source>
        <dbReference type="SAM" id="MobiDB-lite"/>
    </source>
</evidence>
<evidence type="ECO:0000269" key="3">
    <source>
    </source>
</evidence>
<evidence type="ECO:0000269" key="4">
    <source>
    </source>
</evidence>
<evidence type="ECO:0000269" key="5">
    <source>
    </source>
</evidence>
<evidence type="ECO:0000269" key="6">
    <source>
    </source>
</evidence>
<evidence type="ECO:0000269" key="7">
    <source>
    </source>
</evidence>
<evidence type="ECO:0000269" key="8">
    <source>
    </source>
</evidence>
<evidence type="ECO:0000269" key="9">
    <source>
    </source>
</evidence>
<evidence type="ECO:0000269" key="10">
    <source>
    </source>
</evidence>
<evidence type="ECO:0000303" key="11">
    <source>
    </source>
</evidence>
<evidence type="ECO:0000303" key="12">
    <source>
    </source>
</evidence>
<evidence type="ECO:0000303" key="13">
    <source>
    </source>
</evidence>
<evidence type="ECO:0000303" key="14">
    <source>
    </source>
</evidence>
<evidence type="ECO:0000305" key="15"/>
<evidence type="ECO:0007744" key="16">
    <source>
    </source>
</evidence>
<evidence type="ECO:0007744" key="17">
    <source>
    </source>
</evidence>
<evidence type="ECO:0007744" key="18">
    <source>
    </source>
</evidence>
<evidence type="ECO:0007744" key="19">
    <source>
    </source>
</evidence>
<evidence type="ECO:0007744" key="20">
    <source>
    </source>
</evidence>
<evidence type="ECO:0007744" key="21">
    <source>
    </source>
</evidence>
<evidence type="ECO:0007744" key="22">
    <source>
    </source>
</evidence>
<evidence type="ECO:0007829" key="23">
    <source>
        <dbReference type="PDB" id="3BIM"/>
    </source>
</evidence>
<evidence type="ECO:0007829" key="24">
    <source>
        <dbReference type="PDB" id="4HPL"/>
    </source>
</evidence>
<evidence type="ECO:0007829" key="25">
    <source>
        <dbReference type="PDB" id="6B7G"/>
    </source>
</evidence>
<reference key="1">
    <citation type="journal article" date="2000" name="Genes Dev.">
        <title>BCoR, a novel corepressor involved in BCL-6 repression.</title>
        <authorList>
            <person name="Huynh K.D."/>
            <person name="Fischle W."/>
            <person name="Verdin E."/>
            <person name="Bardwell V.J."/>
        </authorList>
    </citation>
    <scope>NUCLEOTIDE SEQUENCE [MRNA] (ISOFORMS 2 AND 3)</scope>
    <scope>FUNCTION</scope>
    <scope>INTERACTION WITH BCL6; HDAC1; HDAC3 AND HDAC5</scope>
    <scope>SUBCELLULAR LOCATION</scope>
    <scope>TISSUE SPECIFICITY</scope>
    <source>
        <tissue>Frontal cortex</tissue>
    </source>
</reference>
<reference key="2">
    <citation type="journal article" date="2004" name="Nat. Genet.">
        <title>Oculofaciocardiodental and Lenz microphthalmia syndromes result from distinct classes of mutations in BCOR.</title>
        <authorList>
            <person name="Ng D."/>
            <person name="Thakker N."/>
            <person name="Corcoran C.M."/>
            <person name="Donnai D."/>
            <person name="Perveen R."/>
            <person name="Schneider A."/>
            <person name="Hadley D.W."/>
            <person name="Tifft C."/>
            <person name="Zhang L."/>
            <person name="Wilkie A.O."/>
            <person name="van der Smagt J.J."/>
            <person name="Gorlin R.J."/>
            <person name="Burgess S.M."/>
            <person name="Bardwell V.J."/>
            <person name="Black G.C.M."/>
            <person name="Biesecker L.G."/>
        </authorList>
    </citation>
    <scope>NUCLEOTIDE SEQUENCE [MRNA] (ISOFORM 1)</scope>
    <scope>FUNCTION</scope>
    <scope>VARIANT MCOPS2 LEU-85</scope>
</reference>
<reference key="3">
    <citation type="journal article" date="2000" name="DNA Res.">
        <title>Prediction of the coding sequences of unidentified human genes. XVIII. The complete sequences of 100 new cDNA clones from brain which code for large proteins in vitro.</title>
        <authorList>
            <person name="Nagase T."/>
            <person name="Kikuno R."/>
            <person name="Nakayama M."/>
            <person name="Hirosawa M."/>
            <person name="Ohara O."/>
        </authorList>
    </citation>
    <scope>NUCLEOTIDE SEQUENCE [LARGE SCALE MRNA] (ISOFORM 3)</scope>
    <source>
        <tissue>Brain</tissue>
    </source>
</reference>
<reference key="4">
    <citation type="submission" date="2005-09" db="EMBL/GenBank/DDBJ databases">
        <authorList>
            <person name="Mural R.J."/>
            <person name="Istrail S."/>
            <person name="Sutton G.G."/>
            <person name="Florea L."/>
            <person name="Halpern A.L."/>
            <person name="Mobarry C.M."/>
            <person name="Lippert R."/>
            <person name="Walenz B."/>
            <person name="Shatkay H."/>
            <person name="Dew I."/>
            <person name="Miller J.R."/>
            <person name="Flanigan M.J."/>
            <person name="Edwards N.J."/>
            <person name="Bolanos R."/>
            <person name="Fasulo D."/>
            <person name="Halldorsson B.V."/>
            <person name="Hannenhalli S."/>
            <person name="Turner R."/>
            <person name="Yooseph S."/>
            <person name="Lu F."/>
            <person name="Nusskern D.R."/>
            <person name="Shue B.C."/>
            <person name="Zheng X.H."/>
            <person name="Zhong F."/>
            <person name="Delcher A.L."/>
            <person name="Huson D.H."/>
            <person name="Kravitz S.A."/>
            <person name="Mouchard L."/>
            <person name="Reinert K."/>
            <person name="Remington K.A."/>
            <person name="Clark A.G."/>
            <person name="Waterman M.S."/>
            <person name="Eichler E.E."/>
            <person name="Adams M.D."/>
            <person name="Hunkapiller M.W."/>
            <person name="Myers E.W."/>
            <person name="Venter J.C."/>
        </authorList>
    </citation>
    <scope>NUCLEOTIDE SEQUENCE [LARGE SCALE GENOMIC DNA]</scope>
</reference>
<reference key="5">
    <citation type="journal article" date="2004" name="Genome Res.">
        <title>The status, quality, and expansion of the NIH full-length cDNA project: the Mammalian Gene Collection (MGC).</title>
        <authorList>
            <consortium name="The MGC Project Team"/>
        </authorList>
    </citation>
    <scope>NUCLEOTIDE SEQUENCE [LARGE SCALE MRNA] (ISOFORM 4)</scope>
    <scope>NUCLEOTIDE SEQUENCE [LARGE SCALE MRNA] OF 1395-1755 (ISOFORM 1)</scope>
    <source>
        <tissue>Liver</tissue>
        <tissue>Lymph</tissue>
        <tissue>Uterus</tissue>
    </source>
</reference>
<reference key="6">
    <citation type="journal article" date="2004" name="Nat. Genet.">
        <title>Complete sequencing and characterization of 21,243 full-length human cDNAs.</title>
        <authorList>
            <person name="Ota T."/>
            <person name="Suzuki Y."/>
            <person name="Nishikawa T."/>
            <person name="Otsuki T."/>
            <person name="Sugiyama T."/>
            <person name="Irie R."/>
            <person name="Wakamatsu A."/>
            <person name="Hayashi K."/>
            <person name="Sato H."/>
            <person name="Nagai K."/>
            <person name="Kimura K."/>
            <person name="Makita H."/>
            <person name="Sekine M."/>
            <person name="Obayashi M."/>
            <person name="Nishi T."/>
            <person name="Shibahara T."/>
            <person name="Tanaka T."/>
            <person name="Ishii S."/>
            <person name="Yamamoto J."/>
            <person name="Saito K."/>
            <person name="Kawai Y."/>
            <person name="Isono Y."/>
            <person name="Nakamura Y."/>
            <person name="Nagahari K."/>
            <person name="Murakami K."/>
            <person name="Yasuda T."/>
            <person name="Iwayanagi T."/>
            <person name="Wagatsuma M."/>
            <person name="Shiratori A."/>
            <person name="Sudo H."/>
            <person name="Hosoiri T."/>
            <person name="Kaku Y."/>
            <person name="Kodaira H."/>
            <person name="Kondo H."/>
            <person name="Sugawara M."/>
            <person name="Takahashi M."/>
            <person name="Kanda K."/>
            <person name="Yokoi T."/>
            <person name="Furuya T."/>
            <person name="Kikkawa E."/>
            <person name="Omura Y."/>
            <person name="Abe K."/>
            <person name="Kamihara K."/>
            <person name="Katsuta N."/>
            <person name="Sato K."/>
            <person name="Tanikawa M."/>
            <person name="Yamazaki M."/>
            <person name="Ninomiya K."/>
            <person name="Ishibashi T."/>
            <person name="Yamashita H."/>
            <person name="Murakawa K."/>
            <person name="Fujimori K."/>
            <person name="Tanai H."/>
            <person name="Kimata M."/>
            <person name="Watanabe M."/>
            <person name="Hiraoka S."/>
            <person name="Chiba Y."/>
            <person name="Ishida S."/>
            <person name="Ono Y."/>
            <person name="Takiguchi S."/>
            <person name="Watanabe S."/>
            <person name="Yosida M."/>
            <person name="Hotuta T."/>
            <person name="Kusano J."/>
            <person name="Kanehori K."/>
            <person name="Takahashi-Fujii A."/>
            <person name="Hara H."/>
            <person name="Tanase T.-O."/>
            <person name="Nomura Y."/>
            <person name="Togiya S."/>
            <person name="Komai F."/>
            <person name="Hara R."/>
            <person name="Takeuchi K."/>
            <person name="Arita M."/>
            <person name="Imose N."/>
            <person name="Musashino K."/>
            <person name="Yuuki H."/>
            <person name="Oshima A."/>
            <person name="Sasaki N."/>
            <person name="Aotsuka S."/>
            <person name="Yoshikawa Y."/>
            <person name="Matsunawa H."/>
            <person name="Ichihara T."/>
            <person name="Shiohata N."/>
            <person name="Sano S."/>
            <person name="Moriya S."/>
            <person name="Momiyama H."/>
            <person name="Satoh N."/>
            <person name="Takami S."/>
            <person name="Terashima Y."/>
            <person name="Suzuki O."/>
            <person name="Nakagawa S."/>
            <person name="Senoh A."/>
            <person name="Mizoguchi H."/>
            <person name="Goto Y."/>
            <person name="Shimizu F."/>
            <person name="Wakebe H."/>
            <person name="Hishigaki H."/>
            <person name="Watanabe T."/>
            <person name="Sugiyama A."/>
            <person name="Takemoto M."/>
            <person name="Kawakami B."/>
            <person name="Yamazaki M."/>
            <person name="Watanabe K."/>
            <person name="Kumagai A."/>
            <person name="Itakura S."/>
            <person name="Fukuzumi Y."/>
            <person name="Fujimori Y."/>
            <person name="Komiyama M."/>
            <person name="Tashiro H."/>
            <person name="Tanigami A."/>
            <person name="Fujiwara T."/>
            <person name="Ono T."/>
            <person name="Yamada K."/>
            <person name="Fujii Y."/>
            <person name="Ozaki K."/>
            <person name="Hirao M."/>
            <person name="Ohmori Y."/>
            <person name="Kawabata A."/>
            <person name="Hikiji T."/>
            <person name="Kobatake N."/>
            <person name="Inagaki H."/>
            <person name="Ikema Y."/>
            <person name="Okamoto S."/>
            <person name="Okitani R."/>
            <person name="Kawakami T."/>
            <person name="Noguchi S."/>
            <person name="Itoh T."/>
            <person name="Shigeta K."/>
            <person name="Senba T."/>
            <person name="Matsumura K."/>
            <person name="Nakajima Y."/>
            <person name="Mizuno T."/>
            <person name="Morinaga M."/>
            <person name="Sasaki M."/>
            <person name="Togashi T."/>
            <person name="Oyama M."/>
            <person name="Hata H."/>
            <person name="Watanabe M."/>
            <person name="Komatsu T."/>
            <person name="Mizushima-Sugano J."/>
            <person name="Satoh T."/>
            <person name="Shirai Y."/>
            <person name="Takahashi Y."/>
            <person name="Nakagawa K."/>
            <person name="Okumura K."/>
            <person name="Nagase T."/>
            <person name="Nomura N."/>
            <person name="Kikuchi H."/>
            <person name="Masuho Y."/>
            <person name="Yamashita R."/>
            <person name="Nakai K."/>
            <person name="Yada T."/>
            <person name="Nakamura Y."/>
            <person name="Ohara O."/>
            <person name="Isogai T."/>
            <person name="Sugano S."/>
        </authorList>
    </citation>
    <scope>NUCLEOTIDE SEQUENCE [LARGE SCALE MRNA] OF 217-1755 (ISOFORM 4)</scope>
    <scope>NUCLEOTIDE SEQUENCE [MRNA] OF 1328-1755</scope>
</reference>
<reference key="7">
    <citation type="journal article" date="2006" name="Cell">
        <title>Global, in vivo, and site-specific phosphorylation dynamics in signaling networks.</title>
        <authorList>
            <person name="Olsen J.V."/>
            <person name="Blagoev B."/>
            <person name="Gnad F."/>
            <person name="Macek B."/>
            <person name="Kumar C."/>
            <person name="Mortensen P."/>
            <person name="Mann M."/>
        </authorList>
    </citation>
    <scope>IDENTIFICATION BY MASS SPECTROMETRY [LARGE SCALE ANALYSIS]</scope>
    <source>
        <tissue>Cervix carcinoma</tissue>
    </source>
</reference>
<reference key="8">
    <citation type="journal article" date="2006" name="Mol. Cell. Biol.">
        <title>Polycomb group and SCF ubiquitin ligases are found in a novel BCOR complex that is recruited to BCL6 targets.</title>
        <authorList>
            <person name="Gearhart M.D."/>
            <person name="Corcoran C.M."/>
            <person name="Wamstad J.A."/>
            <person name="Bardwell V.J."/>
        </authorList>
    </citation>
    <scope>INTERACTION WITH PCGF1 AND KDM2B</scope>
    <scope>IDENTIFICATION IN A COMPLEX WITH RYBP; PCGF1; RING1; RNF2; KDM2B AND SKP1</scope>
</reference>
<reference key="9">
    <citation type="journal article" date="2008" name="Proc. Natl. Acad. Sci. U.S.A.">
        <title>A quantitative atlas of mitotic phosphorylation.</title>
        <authorList>
            <person name="Dephoure N."/>
            <person name="Zhou C."/>
            <person name="Villen J."/>
            <person name="Beausoleil S.A."/>
            <person name="Bakalarski C.E."/>
            <person name="Elledge S.J."/>
            <person name="Gygi S.P."/>
        </authorList>
    </citation>
    <scope>PHOSPHORYLATION [LARGE SCALE ANALYSIS] AT SER-423 AND SER-1410</scope>
    <scope>IDENTIFICATION BY MASS SPECTROMETRY [LARGE SCALE ANALYSIS]</scope>
    <source>
        <tissue>Cervix carcinoma</tissue>
    </source>
</reference>
<reference key="10">
    <citation type="journal article" date="2009" name="Anal. Chem.">
        <title>Lys-N and trypsin cover complementary parts of the phosphoproteome in a refined SCX-based approach.</title>
        <authorList>
            <person name="Gauci S."/>
            <person name="Helbig A.O."/>
            <person name="Slijper M."/>
            <person name="Krijgsveld J."/>
            <person name="Heck A.J."/>
            <person name="Mohammed S."/>
        </authorList>
    </citation>
    <scope>IDENTIFICATION BY MASS SPECTROMETRY [LARGE SCALE ANALYSIS]</scope>
</reference>
<reference key="11">
    <citation type="journal article" date="2009" name="Nat. Cell Biol.">
        <title>BCOR regulates mesenchymal stem cell function by epigenetic mechanisms.</title>
        <authorList>
            <person name="Fan Z."/>
            <person name="Yamaza T."/>
            <person name="Lee J.S."/>
            <person name="Yu J."/>
            <person name="Wang S."/>
            <person name="Fan G."/>
            <person name="Shi S."/>
            <person name="Wang C.-Y."/>
        </authorList>
    </citation>
    <scope>FUNCTION</scope>
</reference>
<reference key="12">
    <citation type="journal article" date="2009" name="Sci. Signal.">
        <title>Quantitative phosphoproteomic analysis of T cell receptor signaling reveals system-wide modulation of protein-protein interactions.</title>
        <authorList>
            <person name="Mayya V."/>
            <person name="Lundgren D.H."/>
            <person name="Hwang S.-I."/>
            <person name="Rezaul K."/>
            <person name="Wu L."/>
            <person name="Eng J.K."/>
            <person name="Rodionov V."/>
            <person name="Han D.K."/>
        </authorList>
    </citation>
    <scope>PHOSPHORYLATION [LARGE SCALE ANALYSIS] AT SER-1139</scope>
    <scope>IDENTIFICATION BY MASS SPECTROMETRY [LARGE SCALE ANALYSIS]</scope>
    <source>
        <tissue>Leukemic T-cell</tissue>
    </source>
</reference>
<reference key="13">
    <citation type="journal article" date="2009" name="Science">
        <title>Lysine acetylation targets protein complexes and co-regulates major cellular functions.</title>
        <authorList>
            <person name="Choudhary C."/>
            <person name="Kumar C."/>
            <person name="Gnad F."/>
            <person name="Nielsen M.L."/>
            <person name="Rehman M."/>
            <person name="Walther T.C."/>
            <person name="Olsen J.V."/>
            <person name="Mann M."/>
        </authorList>
    </citation>
    <scope>ACETYLATION [LARGE SCALE ANALYSIS] AT LYS-392</scope>
    <scope>IDENTIFICATION BY MASS SPECTROMETRY [LARGE SCALE ANALYSIS]</scope>
</reference>
<reference key="14">
    <citation type="journal article" date="2010" name="Sci. Signal.">
        <title>Quantitative phosphoproteomics reveals widespread full phosphorylation site occupancy during mitosis.</title>
        <authorList>
            <person name="Olsen J.V."/>
            <person name="Vermeulen M."/>
            <person name="Santamaria A."/>
            <person name="Kumar C."/>
            <person name="Miller M.L."/>
            <person name="Jensen L.J."/>
            <person name="Gnad F."/>
            <person name="Cox J."/>
            <person name="Jensen T.S."/>
            <person name="Nigg E.A."/>
            <person name="Brunak S."/>
            <person name="Mann M."/>
        </authorList>
    </citation>
    <scope>PHOSPHORYLATION [LARGE SCALE ANALYSIS] AT SER-336; SER-340; SER-365; SER-367 AND SER-423</scope>
    <scope>IDENTIFICATION BY MASS SPECTROMETRY [LARGE SCALE ANALYSIS]</scope>
    <source>
        <tissue>Cervix carcinoma</tissue>
    </source>
</reference>
<reference key="15">
    <citation type="journal article" date="2011" name="BMC Syst. Biol.">
        <title>Initial characterization of the human central proteome.</title>
        <authorList>
            <person name="Burkard T.R."/>
            <person name="Planyavsky M."/>
            <person name="Kaupe I."/>
            <person name="Breitwieser F.P."/>
            <person name="Buerckstuemmer T."/>
            <person name="Bennett K.L."/>
            <person name="Superti-Furga G."/>
            <person name="Colinge J."/>
        </authorList>
    </citation>
    <scope>IDENTIFICATION BY MASS SPECTROMETRY [LARGE SCALE ANALYSIS]</scope>
</reference>
<reference key="16">
    <citation type="journal article" date="2011" name="Sci. Signal.">
        <title>System-wide temporal characterization of the proteome and phosphoproteome of human embryonic stem cell differentiation.</title>
        <authorList>
            <person name="Rigbolt K.T."/>
            <person name="Prokhorova T.A."/>
            <person name="Akimov V."/>
            <person name="Henningsen J."/>
            <person name="Johansen P.T."/>
            <person name="Kratchmarova I."/>
            <person name="Kassem M."/>
            <person name="Mann M."/>
            <person name="Olsen J.V."/>
            <person name="Blagoev B."/>
        </authorList>
    </citation>
    <scope>PHOSPHORYLATION [LARGE SCALE ANALYSIS] AT SER-423</scope>
    <scope>IDENTIFICATION BY MASS SPECTROMETRY [LARGE SCALE ANALYSIS]</scope>
</reference>
<reference key="17">
    <citation type="journal article" date="2013" name="Cell Rep.">
        <title>A hybrid mechanism of action for BCL6 in B cells defined by formation of functionally distinct complexes at enhancers and promoters.</title>
        <authorList>
            <person name="Hatzi K."/>
            <person name="Jiang Y."/>
            <person name="Huang C."/>
            <person name="Garrett-Bakelman F."/>
            <person name="Gearhart M.D."/>
            <person name="Giannopoulou E.G."/>
            <person name="Zumbo P."/>
            <person name="Kirouac K."/>
            <person name="Bhaskara S."/>
            <person name="Polo J.M."/>
            <person name="Kormaksson M."/>
            <person name="Mackerell A.D. Jr."/>
            <person name="Xue F."/>
            <person name="Mason C.E."/>
            <person name="Hiebert S.W."/>
            <person name="Prive G.G."/>
            <person name="Cerchietti L."/>
            <person name="Bardwell V.J."/>
            <person name="Elemento O."/>
            <person name="Melnick A."/>
        </authorList>
    </citation>
    <scope>FUNCTION AS COREPRESSOR</scope>
    <scope>INTERACTION WITH BCL6</scope>
    <scope>IDENTIFICATION IN A COMPLEX WITH BCL6 AND SMRT</scope>
</reference>
<reference key="18">
    <citation type="journal article" date="2013" name="J. Proteome Res.">
        <title>Toward a comprehensive characterization of a human cancer cell phosphoproteome.</title>
        <authorList>
            <person name="Zhou H."/>
            <person name="Di Palma S."/>
            <person name="Preisinger C."/>
            <person name="Peng M."/>
            <person name="Polat A.N."/>
            <person name="Heck A.J."/>
            <person name="Mohammed S."/>
        </authorList>
    </citation>
    <scope>PHOSPHORYLATION [LARGE SCALE ANALYSIS] AT SER-423; SER-1139; SER-1290 AND SER-1410</scope>
    <scope>IDENTIFICATION BY MASS SPECTROMETRY [LARGE SCALE ANALYSIS]</scope>
    <source>
        <tissue>Cervix carcinoma</tissue>
        <tissue>Erythroleukemia</tissue>
    </source>
</reference>
<reference key="19">
    <citation type="journal article" date="2015" name="Sci. Rep.">
        <title>The variant Polycomb Repressor Complex 1 component PCGF1 interacts with a pluripotency sub-network that includes DPPA4, a regulator of embryogenesis.</title>
        <authorList>
            <person name="Oliviero G."/>
            <person name="Munawar N."/>
            <person name="Watson A."/>
            <person name="Streubel G."/>
            <person name="Manning G."/>
            <person name="Bardwell V."/>
            <person name="Bracken A.P."/>
            <person name="Cagney G."/>
        </authorList>
    </citation>
    <scope>IDENTIFICATION BY MASS SPECTROMETRY</scope>
    <scope>INTERACTION WITH PCGF1</scope>
</reference>
<reference key="20">
    <citation type="journal article" date="2017" name="Nat. Struct. Mol. Biol.">
        <title>Site-specific mapping of the human SUMO proteome reveals co-modification with phosphorylation.</title>
        <authorList>
            <person name="Hendriks I.A."/>
            <person name="Lyon D."/>
            <person name="Young C."/>
            <person name="Jensen L.J."/>
            <person name="Vertegaal A.C."/>
            <person name="Nielsen M.L."/>
        </authorList>
    </citation>
    <scope>SUMOYLATION [LARGE SCALE ANALYSIS] AT LYS-786; LYS-872; LYS-1256 AND LYS-1413</scope>
    <scope>IDENTIFICATION BY MASS SPECTROMETRY [LARGE SCALE ANALYSIS]</scope>
</reference>
<reference key="21">
    <citation type="journal article" date="2013" name="Structure">
        <title>Structure of the polycomb group protein PCGF1 in complex with BCOR reveals basis for binding selectivity of PCGF homologs.</title>
        <authorList>
            <person name="Junco S.E."/>
            <person name="Wang R."/>
            <person name="Gaipa J.C."/>
            <person name="Taylor A.B."/>
            <person name="Schirf V."/>
            <person name="Gearhart M.D."/>
            <person name="Bardwell V.J."/>
            <person name="Demeler B."/>
            <person name="Hart P.J."/>
            <person name="Kim C.A."/>
        </authorList>
    </citation>
    <scope>X-RAY CRYSTALLOGRAPHY (2.00 ANGSTROMS) OF 1634-1748 IN COMPLEX WITH PCGF1</scope>
    <scope>INTERACTION WITH PCGF1</scope>
    <scope>MUTAGENESIS OF LEU-1706</scope>
</reference>
<reference key="22">
    <citation type="journal article" date="2008" name="Mol. Cell">
        <title>Structure of a BCOR corepressor peptide in complex with the BCL6 BTB domain dimer.</title>
        <authorList>
            <person name="Ghetu A.F."/>
            <person name="Corcoran C.M."/>
            <person name="Cerchietti L."/>
            <person name="Bardwell V.J."/>
            <person name="Melnick A."/>
            <person name="Prive G.G."/>
        </authorList>
    </citation>
    <scope>X-RAY CRYSTALLOGRAPHY (2.6 ANGSTROMS) OF 498-514 IN COMPLEX WITH BCL6</scope>
    <scope>FUNCTION</scope>
    <scope>MUTAGENESIS OF SER-507; SER-508; TRP-509 AND VAL-511</scope>
</reference>
<comment type="function">
    <text evidence="3 4 6 7 9">Transcriptional corepressor. May specifically inhibit gene expression when recruited to promoter regions by sequence-specific DNA-binding proteins such as BCL6 and MLLT3. This repression may be mediated at least in part by histone deacetylase activities which can associate with this corepressor. Involved in the repression of TFAP2A; impairs binding of BCL6 and KDM2B to TFAP2A promoter regions. Via repression of TFAP2A acts as a negative regulator of osteo-dentiogenic capacity in adult stem cells; the function implies inhibition of methylation on histone H3 'Lys-4' (H3K4me3) and 'Lys-36' (H3K36me2).</text>
</comment>
<comment type="subunit">
    <text evidence="1 3 5 6 8 9 10">Interacts with BCL6; the interaction is direct (PubMed:10898795). Forms ternary complexes with BCL6 and SMRT/NCOR2 on selected target genes promoters; potently repress expression (PubMed:18280243, PubMed:23911289). Can interact with HDAC1, HDAC3 and HDAC5 (PubMed:10898795). Interacts with PCGF1; the interaction is direct (PubMed:16943429, PubMed:23523425, PubMed:26687479). Interacts with KDM2B. Component of an approximately 800 kDa repressive BCOR complex at least composed of BCOR, RYBP, PCGF1, RING1, RNF2/RING2, KDM2B and SKP1 (PubMed:16943429). Interacts with CPNE4 (via VWFA domain) (By similarity). Isoform 1 may interact with MLLT3/AF9 (By similarity).</text>
</comment>
<comment type="interaction">
    <interactant intactId="EBI-950027">
        <id>Q6W2J9</id>
    </interactant>
    <interactant intactId="EBI-712912">
        <id>Q9HC52</id>
        <label>CBX8</label>
    </interactant>
    <organismsDiffer>false</organismsDiffer>
    <experiments>9</experiments>
</comment>
<comment type="interaction">
    <interactant intactId="EBI-950027">
        <id>Q6W2J9</id>
    </interactant>
    <interactant intactId="EBI-3955564">
        <id>Q8NHM5</id>
        <label>KDM2B</label>
    </interactant>
    <organismsDiffer>false</organismsDiffer>
    <experiments>5</experiments>
</comment>
<comment type="interaction">
    <interactant intactId="EBI-950027">
        <id>Q6W2J9</id>
    </interactant>
    <interactant intactId="EBI-749901">
        <id>Q9BSM1</id>
        <label>PCGF1</label>
    </interactant>
    <organismsDiffer>false</organismsDiffer>
    <experiments>14</experiments>
</comment>
<comment type="interaction">
    <interactant intactId="EBI-950027">
        <id>Q6W2J9</id>
    </interactant>
    <interactant intactId="EBI-302474">
        <id>Q93009</id>
        <label>USP7</label>
    </interactant>
    <organismsDiffer>false</organismsDiffer>
    <experiments>4</experiments>
</comment>
<comment type="interaction">
    <interactant intactId="EBI-16028932">
        <id>Q6W2J9-1</id>
    </interactant>
    <interactant intactId="EBI-716132">
        <id>P42568</id>
        <label>MLLT3</label>
    </interactant>
    <organismsDiffer>false</organismsDiffer>
    <experiments>2</experiments>
</comment>
<comment type="interaction">
    <interactant intactId="EBI-16028932">
        <id>Q6W2J9-1</id>
    </interactant>
    <interactant intactId="EBI-16041863">
        <id>Q9BSM1-1</id>
        <label>PCGF1</label>
    </interactant>
    <organismsDiffer>false</organismsDiffer>
    <experiments>7</experiments>
</comment>
<comment type="interaction">
    <interactant intactId="EBI-10208579">
        <id>Q6W2J9-4</id>
    </interactant>
    <interactant intactId="EBI-747693">
        <id>P41227</id>
        <label>NAA10</label>
    </interactant>
    <organismsDiffer>false</organismsDiffer>
    <experiments>3</experiments>
</comment>
<comment type="interaction">
    <interactant intactId="EBI-10208579">
        <id>Q6W2J9-4</id>
    </interactant>
    <interactant intactId="EBI-2339807">
        <id>Q3KNV8</id>
        <label>PCGF3</label>
    </interactant>
    <organismsDiffer>false</organismsDiffer>
    <experiments>3</experiments>
</comment>
<comment type="interaction">
    <interactant intactId="EBI-10208579">
        <id>Q6W2J9-4</id>
    </interactant>
    <interactant intactId="EBI-2827999">
        <id>Q86SE9</id>
        <label>PCGF5</label>
    </interactant>
    <organismsDiffer>false</organismsDiffer>
    <experiments>3</experiments>
</comment>
<comment type="subcellular location">
    <subcellularLocation>
        <location evidence="3">Nucleus</location>
    </subcellularLocation>
</comment>
<comment type="alternative products">
    <event type="alternative splicing"/>
    <isoform>
        <id>Q6W2J9-1</id>
        <name>1</name>
        <name>Long</name>
        <sequence type="displayed"/>
    </isoform>
    <isoform>
        <id>Q6W2J9-2</id>
        <name>2</name>
        <sequence type="described" ref="VSP_012557"/>
    </isoform>
    <isoform>
        <id>Q6W2J9-3</id>
        <name>3</name>
        <name>Short</name>
        <sequence type="described" ref="VSP_012554 VSP_012556"/>
    </isoform>
    <isoform>
        <id>Q6W2J9-4</id>
        <name>4</name>
        <sequence type="described" ref="VSP_012555 VSP_012557"/>
    </isoform>
</comment>
<comment type="tissue specificity">
    <text evidence="3">Ubiquitously expressed.</text>
</comment>
<comment type="disease" evidence="4">
    <disease id="DI-00761">
        <name>Microphthalmia, syndromic, 2</name>
        <acronym>MCOPS2</acronym>
        <description>A very rare multiple congenital anomaly syndrome characterized by eye anomalies (congenital cataract, microphthalmia, or secondary glaucoma), facial abnormalities (long narrow face, high nasal bridge, pointed nose with cartilages separated at the tip, cleft palate, or submucous cleft palate), cardiac anomalies (atrial septal defect, ventricular septal defect, or floppy mitral valve) and dental abnormalities (canine radiculomegaly, delayed dentition, oligodontia, persistent primary teeth, or variable root length). Microphthalmia is a disorder of eye formation, ranging from small size of a single eye to complete bilateral absence of ocular tissues (anophthalmia). In many cases, microphthalmia/anophthalmia occurs in association with syndromes that include non-ocular abnormalities.</description>
        <dbReference type="MIM" id="300166"/>
    </disease>
    <text>The disease is caused by variants affecting the gene represented in this entry.</text>
</comment>
<comment type="similarity">
    <text evidence="15">Belongs to the BCOR family.</text>
</comment>
<comment type="sequence caution" evidence="15">
    <conflict type="miscellaneous discrepancy">
        <sequence resource="EMBL-CDS" id="AAH63536"/>
    </conflict>
    <text>Contaminating sequence. Presence of complementary strand sequence in the clone.</text>
</comment>
<comment type="sequence caution" evidence="15">
    <conflict type="miscellaneous discrepancy">
        <sequence resource="EMBL-CDS" id="BAA91061"/>
    </conflict>
    <text>Intron retention.</text>
</comment>
<comment type="sequence caution" evidence="15">
    <conflict type="erroneous initiation">
        <sequence resource="EMBL-CDS" id="BAB13401"/>
    </conflict>
    <text>Extended N-terminus.</text>
</comment>
<comment type="sequence caution" evidence="15">
    <conflict type="frameshift">
        <sequence resource="EMBL-CDS" id="BAB85037"/>
    </conflict>
</comment>
<name>BCOR_HUMAN</name>
<sequence>MLSATPLYGNVHSWMNSERVRMCGASEDRKILVNDGDASKARLELREENPLNHNVVDASTAHRIDGLAALSMDRTGLIREGLRVPGNIVYSSLCGLGSEKGREAATSTLGGLGFSSERNPEMQFKPNTPETVEASAVSGKPPNGFSAIYKTPPGIQKSAVATAEALGLDRPASDKQSPLNINGASYLRLPWVNPYMEGATPAIYPFLDSPNKYSLNMYKALLPQQSYSLAQPLYSPVCTNGERFLYLPPPHYVGPHIPSSLASPMRLSTPSASPAIPPLVHCADKSLPWKMGVSPGNPVDSHAYPHIQNSKQPRVPSAKAVTSGLPGDTALLLPPSPRPSPRVHLPTQPAADTYSEFHKHYARISTSPSVALSKPYMTVSSEFPAARLSNGKYPKAPEGGEGAQPVPGHARKTAVQDRKDGSSPPLLEKQTVTKDVTDKPLDLSSKVVDVDASKADHMKKMAPTVLVHSRAGSGLVLSGSEIPKETLSPPGNGCAIYRSEIISTAPSSWVVPGPSPNEENNGKSMSLKNKALDWAIPQQRSSSCPRMGGTDAVITNVSGSVSSAGRPASASPAPNANADGTKTSRSSVETTPSVIQHVGQPPATPAKHSSSTSSKGAKASNPEPSFKANENGLPPSSIFLSPNEAFRSPPIPYPRSYLPYPAPEGIAVSPLSLHGKGPVYPHPVLLPNGSLFPGHLAPKPGLPYGLPTGRPEFVTYQDALGLGMVHPMLIPHTPIEITKEEKPERRSRSHERARYEDPTLRNRFSEILETSSTKLHPDVPTDKNLKPNPNWNQGKTVVKSDKLVYVDLLREEPDAKTDTNVSKPSFAAESVGQSAEPPKPSVEPALQQHRDFIALREELGRISDFHETYTFKQPVFTVSKDSVLAGTNKENLGLPVSTPFLEPPLGSDGPAVTFGKTQEDPKPFCVGSAPPSVDVTPTYTKDGADEAESNDGKVLKPKPSKLAKRIANSAGYVGDRFKCVTTELYADSSQLSREQRALQMEGLQEDSILCLPAAYCERAMMRFSELEMKEREGGHPATKDSEMCKFSPADWERLKGNQDKKPKSVTLEEAIAEQNESERCEYSVGNKHRDPFEAPEDKDLPVEKYFVERQPVSEPPADQVASDMPHSPTLRVDRKRKVSGDSSHTETTAEEVPEDPLLKAKRRRVSKDDWPEREMTNSSSNHLEDPHYSELTNLKVCIELTGLHPKKQRHLLHLRERWEQQVSAADGKPGRQSRKEVTQATQPEAIPQGTNITEEKPGRKRAEAKGNRSWSEESLKPSDNEQGLPVFSGSPPMKSLSSTSAGGKKQAQPSCAPASRPPAKQQKIKENQKTDVLCADEEEDCQAASLLQKYTDNSEKPSGKRLCKTKHLIPQESRRGLPLTGEYYVENADGKVTVRRFRKRPEPSSDYDLSPAKQEPKPFDRLQQLLPASQSTQLPCSSSPQETTQSRPMPPEARRLIVNKNAGETLLQRAARLGYEEVVLYCLENKICDVNHRDNAGYCALHEACARGWLNIVRHLLEYGADVNCSAQDGTRPLHDAVENDHLEIVRLLLSYGADPTLATYSGRTIMKMTHSELMEKFLTDYLNDLQGRNDDDASGTWDFYGSSVCEPDDESGYDVLANPPGPEDQDDDDDAYSDVFEFEFSETPLLPCYNIQVSVAQGPRNWLLLSDVLKKLKMSSRIFRCNFPNVEIVTIAEAEFYRQVSASLLFSCSKDLEAFNPESKELLDLVEFTNEIQTLLGSSVEWLHPSDLASDNYW</sequence>
<protein>
    <recommendedName>
        <fullName>BCL-6 corepressor</fullName>
        <shortName>BCoR</shortName>
    </recommendedName>
</protein>
<proteinExistence type="evidence at protein level"/>
<dbReference type="EMBL" id="AF317391">
    <property type="protein sequence ID" value="AAG41429.1"/>
    <property type="molecule type" value="mRNA"/>
</dbReference>
<dbReference type="EMBL" id="AF317392">
    <property type="protein sequence ID" value="AAG41430.1"/>
    <property type="molecule type" value="mRNA"/>
</dbReference>
<dbReference type="EMBL" id="AY316592">
    <property type="protein sequence ID" value="AAR08265.1"/>
    <property type="molecule type" value="mRNA"/>
</dbReference>
<dbReference type="EMBL" id="AB046795">
    <property type="protein sequence ID" value="BAB13401.2"/>
    <property type="status" value="ALT_INIT"/>
    <property type="molecule type" value="mRNA"/>
</dbReference>
<dbReference type="EMBL" id="CH471141">
    <property type="protein sequence ID" value="EAW59425.1"/>
    <property type="molecule type" value="Genomic_DNA"/>
</dbReference>
<dbReference type="EMBL" id="CH471141">
    <property type="protein sequence ID" value="EAW59427.1"/>
    <property type="molecule type" value="Genomic_DNA"/>
</dbReference>
<dbReference type="EMBL" id="CH471141">
    <property type="protein sequence ID" value="EAW59428.1"/>
    <property type="molecule type" value="Genomic_DNA"/>
</dbReference>
<dbReference type="EMBL" id="CH471141">
    <property type="protein sequence ID" value="EAW59430.1"/>
    <property type="molecule type" value="Genomic_DNA"/>
</dbReference>
<dbReference type="EMBL" id="BC009675">
    <property type="protein sequence ID" value="AAH09675.2"/>
    <property type="molecule type" value="mRNA"/>
</dbReference>
<dbReference type="EMBL" id="BC063536">
    <property type="protein sequence ID" value="AAH63536.1"/>
    <property type="status" value="ALT_SEQ"/>
    <property type="molecule type" value="mRNA"/>
</dbReference>
<dbReference type="EMBL" id="BC114220">
    <property type="protein sequence ID" value="AAI14221.1"/>
    <property type="molecule type" value="mRNA"/>
</dbReference>
<dbReference type="EMBL" id="AK000292">
    <property type="protein sequence ID" value="BAA91061.1"/>
    <property type="status" value="ALT_SEQ"/>
    <property type="molecule type" value="mRNA"/>
</dbReference>
<dbReference type="EMBL" id="AK074286">
    <property type="protein sequence ID" value="BAB85037.1"/>
    <property type="status" value="ALT_FRAME"/>
    <property type="molecule type" value="mRNA"/>
</dbReference>
<dbReference type="CCDS" id="CCDS14250.1">
    <molecule id="Q6W2J9-2"/>
</dbReference>
<dbReference type="CCDS" id="CCDS48092.1">
    <molecule id="Q6W2J9-4"/>
</dbReference>
<dbReference type="CCDS" id="CCDS48093.1">
    <molecule id="Q6W2J9-1"/>
</dbReference>
<dbReference type="RefSeq" id="NP_001116855.1">
    <molecule id="Q6W2J9-2"/>
    <property type="nucleotide sequence ID" value="NM_001123383.1"/>
</dbReference>
<dbReference type="RefSeq" id="NP_001116856.1">
    <molecule id="Q6W2J9-4"/>
    <property type="nucleotide sequence ID" value="NM_001123384.2"/>
</dbReference>
<dbReference type="RefSeq" id="NP_001116857.1">
    <molecule id="Q6W2J9-1"/>
    <property type="nucleotide sequence ID" value="NM_001123385.2"/>
</dbReference>
<dbReference type="RefSeq" id="NP_060215.4">
    <molecule id="Q6W2J9-2"/>
    <property type="nucleotide sequence ID" value="NM_017745.5"/>
</dbReference>
<dbReference type="RefSeq" id="XP_005272673.1">
    <molecule id="Q6W2J9-1"/>
    <property type="nucleotide sequence ID" value="XM_005272616.2"/>
</dbReference>
<dbReference type="RefSeq" id="XP_005272675.1">
    <molecule id="Q6W2J9-1"/>
    <property type="nucleotide sequence ID" value="XM_005272618.4"/>
</dbReference>
<dbReference type="RefSeq" id="XP_005272677.1">
    <molecule id="Q6W2J9-4"/>
    <property type="nucleotide sequence ID" value="XM_005272620.5"/>
</dbReference>
<dbReference type="RefSeq" id="XP_006724599.1">
    <molecule id="Q6W2J9-1"/>
    <property type="nucleotide sequence ID" value="XM_006724536.4"/>
</dbReference>
<dbReference type="RefSeq" id="XP_011542231.1">
    <molecule id="Q6W2J9-1"/>
    <property type="nucleotide sequence ID" value="XM_011543929.3"/>
</dbReference>
<dbReference type="RefSeq" id="XP_011542232.1">
    <molecule id="Q6W2J9-1"/>
    <property type="nucleotide sequence ID" value="XM_011543930.2"/>
</dbReference>
<dbReference type="RefSeq" id="XP_011542233.1">
    <molecule id="Q6W2J9-1"/>
    <property type="nucleotide sequence ID" value="XM_011543931.3"/>
</dbReference>
<dbReference type="RefSeq" id="XP_016885104.1">
    <molecule id="Q6W2J9-2"/>
    <property type="nucleotide sequence ID" value="XM_017029615.2"/>
</dbReference>
<dbReference type="RefSeq" id="XP_047298152.1">
    <molecule id="Q6W2J9-1"/>
    <property type="nucleotide sequence ID" value="XM_047442196.1"/>
</dbReference>
<dbReference type="RefSeq" id="XP_047298153.1">
    <molecule id="Q6W2J9-1"/>
    <property type="nucleotide sequence ID" value="XM_047442197.1"/>
</dbReference>
<dbReference type="RefSeq" id="XP_047298154.1">
    <molecule id="Q6W2J9-1"/>
    <property type="nucleotide sequence ID" value="XM_047442198.1"/>
</dbReference>
<dbReference type="RefSeq" id="XP_047298155.1">
    <molecule id="Q6W2J9-1"/>
    <property type="nucleotide sequence ID" value="XM_047442199.1"/>
</dbReference>
<dbReference type="RefSeq" id="XP_047298156.1">
    <molecule id="Q6W2J9-1"/>
    <property type="nucleotide sequence ID" value="XM_047442200.1"/>
</dbReference>
<dbReference type="RefSeq" id="XP_047298166.1">
    <molecule id="Q6W2J9-2"/>
    <property type="nucleotide sequence ID" value="XM_047442210.1"/>
</dbReference>
<dbReference type="RefSeq" id="XP_047298167.1">
    <molecule id="Q6W2J9-2"/>
    <property type="nucleotide sequence ID" value="XM_047442211.1"/>
</dbReference>
<dbReference type="RefSeq" id="XP_047298168.1">
    <molecule id="Q6W2J9-2"/>
    <property type="nucleotide sequence ID" value="XM_047442212.1"/>
</dbReference>
<dbReference type="RefSeq" id="XP_047298169.1">
    <molecule id="Q6W2J9-2"/>
    <property type="nucleotide sequence ID" value="XM_047442213.1"/>
</dbReference>
<dbReference type="RefSeq" id="XP_047298170.1">
    <molecule id="Q6W2J9-2"/>
    <property type="nucleotide sequence ID" value="XM_047442214.1"/>
</dbReference>
<dbReference type="RefSeq" id="XP_047298171.1">
    <molecule id="Q6W2J9-2"/>
    <property type="nucleotide sequence ID" value="XM_047442215.1"/>
</dbReference>
<dbReference type="RefSeq" id="XP_047298172.1">
    <molecule id="Q6W2J9-2"/>
    <property type="nucleotide sequence ID" value="XM_047442216.1"/>
</dbReference>
<dbReference type="RefSeq" id="XP_047298173.1">
    <molecule id="Q6W2J9-2"/>
    <property type="nucleotide sequence ID" value="XM_047442217.1"/>
</dbReference>
<dbReference type="RefSeq" id="XP_047298174.1">
    <molecule id="Q6W2J9-2"/>
    <property type="nucleotide sequence ID" value="XM_047442218.1"/>
</dbReference>
<dbReference type="RefSeq" id="XP_047298175.1">
    <molecule id="Q6W2J9-4"/>
    <property type="nucleotide sequence ID" value="XM_047442219.1"/>
</dbReference>
<dbReference type="RefSeq" id="XP_047298176.1">
    <molecule id="Q6W2J9-4"/>
    <property type="nucleotide sequence ID" value="XM_047442220.1"/>
</dbReference>
<dbReference type="RefSeq" id="XP_047298177.1">
    <molecule id="Q6W2J9-4"/>
    <property type="nucleotide sequence ID" value="XM_047442221.1"/>
</dbReference>
<dbReference type="RefSeq" id="XP_047298178.1">
    <molecule id="Q6W2J9-4"/>
    <property type="nucleotide sequence ID" value="XM_047442222.1"/>
</dbReference>
<dbReference type="RefSeq" id="XP_047298179.1">
    <molecule id="Q6W2J9-4"/>
    <property type="nucleotide sequence ID" value="XM_047442223.1"/>
</dbReference>
<dbReference type="RefSeq" id="XP_047298180.1">
    <molecule id="Q6W2J9-4"/>
    <property type="nucleotide sequence ID" value="XM_047442224.1"/>
</dbReference>
<dbReference type="RefSeq" id="XP_047298181.1">
    <molecule id="Q6W2J9-4"/>
    <property type="nucleotide sequence ID" value="XM_047442225.1"/>
</dbReference>
<dbReference type="RefSeq" id="XP_047298182.1">
    <molecule id="Q6W2J9-4"/>
    <property type="nucleotide sequence ID" value="XM_047442226.1"/>
</dbReference>
<dbReference type="RefSeq" id="XP_047298183.1">
    <molecule id="Q6W2J9-4"/>
    <property type="nucleotide sequence ID" value="XM_047442227.1"/>
</dbReference>
<dbReference type="RefSeq" id="XP_047298184.1">
    <molecule id="Q6W2J9-4"/>
    <property type="nucleotide sequence ID" value="XM_047442228.1"/>
</dbReference>
<dbReference type="RefSeq" id="XP_054183268.1">
    <molecule id="Q6W2J9-1"/>
    <property type="nucleotide sequence ID" value="XM_054327293.1"/>
</dbReference>
<dbReference type="RefSeq" id="XP_054183269.1">
    <molecule id="Q6W2J9-1"/>
    <property type="nucleotide sequence ID" value="XM_054327294.1"/>
</dbReference>
<dbReference type="RefSeq" id="XP_054183270.1">
    <molecule id="Q6W2J9-1"/>
    <property type="nucleotide sequence ID" value="XM_054327295.1"/>
</dbReference>
<dbReference type="RefSeq" id="XP_054183271.1">
    <molecule id="Q6W2J9-1"/>
    <property type="nucleotide sequence ID" value="XM_054327296.1"/>
</dbReference>
<dbReference type="RefSeq" id="XP_054183272.1">
    <molecule id="Q6W2J9-1"/>
    <property type="nucleotide sequence ID" value="XM_054327297.1"/>
</dbReference>
<dbReference type="RefSeq" id="XP_054183273.1">
    <molecule id="Q6W2J9-1"/>
    <property type="nucleotide sequence ID" value="XM_054327298.1"/>
</dbReference>
<dbReference type="RefSeq" id="XP_054183274.1">
    <molecule id="Q6W2J9-1"/>
    <property type="nucleotide sequence ID" value="XM_054327299.1"/>
</dbReference>
<dbReference type="RefSeq" id="XP_054183275.1">
    <molecule id="Q6W2J9-1"/>
    <property type="nucleotide sequence ID" value="XM_054327300.1"/>
</dbReference>
<dbReference type="RefSeq" id="XP_054183276.1">
    <molecule id="Q6W2J9-1"/>
    <property type="nucleotide sequence ID" value="XM_054327301.1"/>
</dbReference>
<dbReference type="RefSeq" id="XP_054183277.1">
    <molecule id="Q6W2J9-1"/>
    <property type="nucleotide sequence ID" value="XM_054327302.1"/>
</dbReference>
<dbReference type="RefSeq" id="XP_054183278.1">
    <molecule id="Q6W2J9-1"/>
    <property type="nucleotide sequence ID" value="XM_054327303.1"/>
</dbReference>
<dbReference type="RefSeq" id="XP_054183289.1">
    <molecule id="Q6W2J9-2"/>
    <property type="nucleotide sequence ID" value="XM_054327314.1"/>
</dbReference>
<dbReference type="RefSeq" id="XP_054183290.1">
    <molecule id="Q6W2J9-2"/>
    <property type="nucleotide sequence ID" value="XM_054327315.1"/>
</dbReference>
<dbReference type="RefSeq" id="XP_054183291.1">
    <molecule id="Q6W2J9-2"/>
    <property type="nucleotide sequence ID" value="XM_054327316.1"/>
</dbReference>
<dbReference type="RefSeq" id="XP_054183292.1">
    <molecule id="Q6W2J9-2"/>
    <property type="nucleotide sequence ID" value="XM_054327317.1"/>
</dbReference>
<dbReference type="RefSeq" id="XP_054183293.1">
    <molecule id="Q6W2J9-2"/>
    <property type="nucleotide sequence ID" value="XM_054327318.1"/>
</dbReference>
<dbReference type="RefSeq" id="XP_054183294.1">
    <molecule id="Q6W2J9-2"/>
    <property type="nucleotide sequence ID" value="XM_054327319.1"/>
</dbReference>
<dbReference type="RefSeq" id="XP_054183295.1">
    <molecule id="Q6W2J9-2"/>
    <property type="nucleotide sequence ID" value="XM_054327320.1"/>
</dbReference>
<dbReference type="RefSeq" id="XP_054183296.1">
    <molecule id="Q6W2J9-2"/>
    <property type="nucleotide sequence ID" value="XM_054327321.1"/>
</dbReference>
<dbReference type="RefSeq" id="XP_054183297.1">
    <molecule id="Q6W2J9-2"/>
    <property type="nucleotide sequence ID" value="XM_054327322.1"/>
</dbReference>
<dbReference type="RefSeq" id="XP_054183298.1">
    <molecule id="Q6W2J9-2"/>
    <property type="nucleotide sequence ID" value="XM_054327323.1"/>
</dbReference>
<dbReference type="RefSeq" id="XP_054183299.1">
    <molecule id="Q6W2J9-4"/>
    <property type="nucleotide sequence ID" value="XM_054327324.1"/>
</dbReference>
<dbReference type="RefSeq" id="XP_054183300.1">
    <molecule id="Q6W2J9-4"/>
    <property type="nucleotide sequence ID" value="XM_054327325.1"/>
</dbReference>
<dbReference type="RefSeq" id="XP_054183301.1">
    <molecule id="Q6W2J9-4"/>
    <property type="nucleotide sequence ID" value="XM_054327326.1"/>
</dbReference>
<dbReference type="RefSeq" id="XP_054183302.1">
    <molecule id="Q6W2J9-4"/>
    <property type="nucleotide sequence ID" value="XM_054327327.1"/>
</dbReference>
<dbReference type="RefSeq" id="XP_054183303.1">
    <molecule id="Q6W2J9-4"/>
    <property type="nucleotide sequence ID" value="XM_054327328.1"/>
</dbReference>
<dbReference type="RefSeq" id="XP_054183304.1">
    <molecule id="Q6W2J9-4"/>
    <property type="nucleotide sequence ID" value="XM_054327329.1"/>
</dbReference>
<dbReference type="RefSeq" id="XP_054183305.1">
    <molecule id="Q6W2J9-4"/>
    <property type="nucleotide sequence ID" value="XM_054327330.1"/>
</dbReference>
<dbReference type="RefSeq" id="XP_054183306.1">
    <molecule id="Q6W2J9-4"/>
    <property type="nucleotide sequence ID" value="XM_054327331.1"/>
</dbReference>
<dbReference type="RefSeq" id="XP_054183307.1">
    <molecule id="Q6W2J9-4"/>
    <property type="nucleotide sequence ID" value="XM_054327332.1"/>
</dbReference>
<dbReference type="RefSeq" id="XP_054183308.1">
    <molecule id="Q6W2J9-4"/>
    <property type="nucleotide sequence ID" value="XM_054327333.1"/>
</dbReference>
<dbReference type="RefSeq" id="XP_054183309.1">
    <molecule id="Q6W2J9-4"/>
    <property type="nucleotide sequence ID" value="XM_054327334.1"/>
</dbReference>
<dbReference type="PDB" id="2N1L">
    <property type="method" value="NMR"/>
    <property type="chains" value="A=1634-1748"/>
</dbReference>
<dbReference type="PDB" id="3BIM">
    <property type="method" value="X-ray"/>
    <property type="resolution" value="2.60 A"/>
    <property type="chains" value="I/J/K/L/M/N/O/P=498-514"/>
</dbReference>
<dbReference type="PDB" id="4HPL">
    <property type="method" value="X-ray"/>
    <property type="resolution" value="2.00 A"/>
    <property type="chains" value="A=1634-1748"/>
</dbReference>
<dbReference type="PDB" id="6B7G">
    <property type="method" value="NMR"/>
    <property type="chains" value="B=1176-1207"/>
</dbReference>
<dbReference type="PDB" id="8HCU">
    <property type="method" value="X-ray"/>
    <property type="resolution" value="2.20 A"/>
    <property type="chains" value="C=1607-1748"/>
</dbReference>
<dbReference type="PDBsum" id="2N1L"/>
<dbReference type="PDBsum" id="3BIM"/>
<dbReference type="PDBsum" id="4HPL"/>
<dbReference type="PDBsum" id="6B7G"/>
<dbReference type="PDBsum" id="8HCU"/>
<dbReference type="SASBDB" id="Q6W2J9"/>
<dbReference type="SMR" id="Q6W2J9"/>
<dbReference type="BioGRID" id="120228">
    <property type="interactions" value="305"/>
</dbReference>
<dbReference type="ComplexPortal" id="CPX-2272">
    <property type="entry name" value="Non-canonical polycomb repressive complex 1.1, RING2-PCGF1-YAF2 variant"/>
</dbReference>
<dbReference type="ComplexPortal" id="CPX-2354">
    <property type="entry name" value="Non-canonical polycomb repressive complex 1.1, RING1-PCGF1-RYBP variant"/>
</dbReference>
<dbReference type="ComplexPortal" id="CPX-7561">
    <property type="entry name" value="Non-canonical polycomb repressive complex 1.1, RING1-PCGF1-YAF2 variant"/>
</dbReference>
<dbReference type="CORUM" id="Q6W2J9"/>
<dbReference type="DIP" id="DIP-50009N"/>
<dbReference type="FunCoup" id="Q6W2J9">
    <property type="interactions" value="2898"/>
</dbReference>
<dbReference type="IntAct" id="Q6W2J9">
    <property type="interactions" value="161"/>
</dbReference>
<dbReference type="MINT" id="Q6W2J9"/>
<dbReference type="STRING" id="9606.ENSP00000367705"/>
<dbReference type="GlyCosmos" id="Q6W2J9">
    <property type="glycosylation" value="6 sites, 1 glycan"/>
</dbReference>
<dbReference type="GlyGen" id="Q6W2J9">
    <property type="glycosylation" value="13 sites, 1 O-linked glycan (12 sites)"/>
</dbReference>
<dbReference type="iPTMnet" id="Q6W2J9"/>
<dbReference type="PhosphoSitePlus" id="Q6W2J9"/>
<dbReference type="SwissPalm" id="Q6W2J9"/>
<dbReference type="BioMuta" id="BCOR"/>
<dbReference type="jPOST" id="Q6W2J9"/>
<dbReference type="MassIVE" id="Q6W2J9"/>
<dbReference type="PaxDb" id="9606-ENSP00000367705"/>
<dbReference type="PeptideAtlas" id="Q6W2J9"/>
<dbReference type="ProteomicsDB" id="67737">
    <molecule id="Q6W2J9-1"/>
</dbReference>
<dbReference type="ProteomicsDB" id="67738">
    <molecule id="Q6W2J9-2"/>
</dbReference>
<dbReference type="ProteomicsDB" id="67739">
    <molecule id="Q6W2J9-3"/>
</dbReference>
<dbReference type="ProteomicsDB" id="67740">
    <molecule id="Q6W2J9-4"/>
</dbReference>
<dbReference type="Pumba" id="Q6W2J9"/>
<dbReference type="Antibodypedia" id="24949">
    <property type="antibodies" value="310 antibodies from 33 providers"/>
</dbReference>
<dbReference type="DNASU" id="54880"/>
<dbReference type="Ensembl" id="ENST00000342274.8">
    <molecule id="Q6W2J9-2"/>
    <property type="protein sequence ID" value="ENSP00000345923.4"/>
    <property type="gene ID" value="ENSG00000183337.18"/>
</dbReference>
<dbReference type="Ensembl" id="ENST00000378444.9">
    <molecule id="Q6W2J9-1"/>
    <property type="protein sequence ID" value="ENSP00000367705.4"/>
    <property type="gene ID" value="ENSG00000183337.18"/>
</dbReference>
<dbReference type="Ensembl" id="ENST00000378455.8">
    <molecule id="Q6W2J9-4"/>
    <property type="protein sequence ID" value="ENSP00000367716.4"/>
    <property type="gene ID" value="ENSG00000183337.18"/>
</dbReference>
<dbReference type="Ensembl" id="ENST00000397354.7">
    <molecule id="Q6W2J9-2"/>
    <property type="protein sequence ID" value="ENSP00000380512.3"/>
    <property type="gene ID" value="ENSG00000183337.18"/>
</dbReference>
<dbReference type="Ensembl" id="ENST00000406200.4">
    <molecule id="Q6W2J9-1"/>
    <property type="protein sequence ID" value="ENSP00000384485.3"/>
    <property type="gene ID" value="ENSG00000183337.18"/>
</dbReference>
<dbReference type="Ensembl" id="ENST00000615339.2">
    <molecule id="Q6W2J9-1"/>
    <property type="protein sequence ID" value="ENSP00000483217.2"/>
    <property type="gene ID" value="ENSG00000183337.18"/>
</dbReference>
<dbReference type="Ensembl" id="ENST00000672922.2">
    <molecule id="Q6W2J9-1"/>
    <property type="protein sequence ID" value="ENSP00000499892.2"/>
    <property type="gene ID" value="ENSG00000183337.18"/>
</dbReference>
<dbReference type="Ensembl" id="ENST00000673391.1">
    <molecule id="Q6W2J9-2"/>
    <property type="protein sequence ID" value="ENSP00000500446.1"/>
    <property type="gene ID" value="ENSG00000183337.18"/>
</dbReference>
<dbReference type="Ensembl" id="ENST00000679513.1">
    <molecule id="Q6W2J9-1"/>
    <property type="protein sequence ID" value="ENSP00000505761.1"/>
    <property type="gene ID" value="ENSG00000183337.18"/>
</dbReference>
<dbReference type="Ensembl" id="ENST00000680831.1">
    <molecule id="Q6W2J9-1"/>
    <property type="protein sequence ID" value="ENSP00000505507.1"/>
    <property type="gene ID" value="ENSG00000183337.18"/>
</dbReference>
<dbReference type="GeneID" id="54880"/>
<dbReference type="KEGG" id="hsa:54880"/>
<dbReference type="MANE-Select" id="ENST00000378444.9">
    <property type="protein sequence ID" value="ENSP00000367705.4"/>
    <property type="RefSeq nucleotide sequence ID" value="NM_001123385.2"/>
    <property type="RefSeq protein sequence ID" value="NP_001116857.1"/>
</dbReference>
<dbReference type="UCSC" id="uc004dem.5">
    <molecule id="Q6W2J9-1"/>
    <property type="organism name" value="human"/>
</dbReference>
<dbReference type="AGR" id="HGNC:20893"/>
<dbReference type="CTD" id="54880"/>
<dbReference type="DisGeNET" id="54880"/>
<dbReference type="GeneCards" id="BCOR"/>
<dbReference type="HGNC" id="HGNC:20893">
    <property type="gene designation" value="BCOR"/>
</dbReference>
<dbReference type="HPA" id="ENSG00000183337">
    <property type="expression patterns" value="Low tissue specificity"/>
</dbReference>
<dbReference type="MalaCards" id="BCOR"/>
<dbReference type="MIM" id="300166">
    <property type="type" value="phenotype"/>
</dbReference>
<dbReference type="MIM" id="300485">
    <property type="type" value="gene"/>
</dbReference>
<dbReference type="neXtProt" id="NX_Q6W2J9"/>
<dbReference type="OpenTargets" id="ENSG00000183337"/>
<dbReference type="Orphanet" id="520">
    <property type="disease" value="Acute promyelocytic leukemia"/>
</dbReference>
<dbReference type="Orphanet" id="457246">
    <property type="disease" value="Clear cell sarcoma of kidney"/>
</dbReference>
<dbReference type="Orphanet" id="568">
    <property type="disease" value="Microphthalmia, Lenz type"/>
</dbReference>
<dbReference type="Orphanet" id="2712">
    <property type="disease" value="Oculofaciocardiodental syndrome"/>
</dbReference>
<dbReference type="PharmGKB" id="PA134921737"/>
<dbReference type="VEuPathDB" id="HostDB:ENSG00000183337"/>
<dbReference type="eggNOG" id="ENOG502RZ5N">
    <property type="taxonomic scope" value="Eukaryota"/>
</dbReference>
<dbReference type="GeneTree" id="ENSGT00940000153737"/>
<dbReference type="HOGENOM" id="CLU_003863_0_0_1"/>
<dbReference type="InParanoid" id="Q6W2J9"/>
<dbReference type="OMA" id="CTEEKHP"/>
<dbReference type="OrthoDB" id="3666223at2759"/>
<dbReference type="PAN-GO" id="Q6W2J9">
    <property type="GO annotations" value="3 GO annotations based on evolutionary models"/>
</dbReference>
<dbReference type="PhylomeDB" id="Q6W2J9"/>
<dbReference type="TreeFam" id="TF333317"/>
<dbReference type="PathwayCommons" id="Q6W2J9"/>
<dbReference type="SignaLink" id="Q6W2J9"/>
<dbReference type="SIGNOR" id="Q6W2J9"/>
<dbReference type="BioGRID-ORCS" id="54880">
    <property type="hits" value="19 hits in 798 CRISPR screens"/>
</dbReference>
<dbReference type="CD-CODE" id="91857CE7">
    <property type="entry name" value="Nucleolus"/>
</dbReference>
<dbReference type="ChiTaRS" id="BCOR">
    <property type="organism name" value="human"/>
</dbReference>
<dbReference type="EvolutionaryTrace" id="Q6W2J9"/>
<dbReference type="GeneWiki" id="BCOR"/>
<dbReference type="GenomeRNAi" id="54880"/>
<dbReference type="Pharos" id="Q6W2J9">
    <property type="development level" value="Tbio"/>
</dbReference>
<dbReference type="PRO" id="PR:Q6W2J9"/>
<dbReference type="Proteomes" id="UP000005640">
    <property type="component" value="Chromosome X"/>
</dbReference>
<dbReference type="RNAct" id="Q6W2J9">
    <property type="molecule type" value="protein"/>
</dbReference>
<dbReference type="Bgee" id="ENSG00000183337">
    <property type="expression patterns" value="Expressed in buccal mucosa cell and 176 other cell types or tissues"/>
</dbReference>
<dbReference type="ExpressionAtlas" id="Q6W2J9">
    <property type="expression patterns" value="baseline and differential"/>
</dbReference>
<dbReference type="GO" id="GO:0140261">
    <property type="term" value="C:BCOR complex"/>
    <property type="evidence" value="ECO:0000314"/>
    <property type="project" value="UniProtKB"/>
</dbReference>
<dbReference type="GO" id="GO:0005654">
    <property type="term" value="C:nucleoplasm"/>
    <property type="evidence" value="ECO:0000314"/>
    <property type="project" value="HPA"/>
</dbReference>
<dbReference type="GO" id="GO:0005634">
    <property type="term" value="C:nucleus"/>
    <property type="evidence" value="ECO:0000314"/>
    <property type="project" value="UniProtKB"/>
</dbReference>
<dbReference type="GO" id="GO:0140297">
    <property type="term" value="F:DNA-binding transcription factor binding"/>
    <property type="evidence" value="ECO:0000353"/>
    <property type="project" value="UniProtKB"/>
</dbReference>
<dbReference type="GO" id="GO:0031072">
    <property type="term" value="F:heat shock protein binding"/>
    <property type="evidence" value="ECO:0000314"/>
    <property type="project" value="UniProtKB"/>
</dbReference>
<dbReference type="GO" id="GO:0042826">
    <property type="term" value="F:histone deacetylase binding"/>
    <property type="evidence" value="ECO:0000353"/>
    <property type="project" value="UniProtKB"/>
</dbReference>
<dbReference type="GO" id="GO:0000977">
    <property type="term" value="F:RNA polymerase II transcription regulatory region sequence-specific DNA binding"/>
    <property type="evidence" value="ECO:0007669"/>
    <property type="project" value="Ensembl"/>
</dbReference>
<dbReference type="GO" id="GO:0000976">
    <property type="term" value="F:transcription cis-regulatory region binding"/>
    <property type="evidence" value="ECO:0000315"/>
    <property type="project" value="UniProtKB"/>
</dbReference>
<dbReference type="GO" id="GO:0003714">
    <property type="term" value="F:transcription corepressor activity"/>
    <property type="evidence" value="ECO:0000314"/>
    <property type="project" value="UniProtKB"/>
</dbReference>
<dbReference type="GO" id="GO:0001835">
    <property type="term" value="P:blastocyst hatching"/>
    <property type="evidence" value="ECO:0007669"/>
    <property type="project" value="Ensembl"/>
</dbReference>
<dbReference type="GO" id="GO:0006338">
    <property type="term" value="P:chromatin remodeling"/>
    <property type="evidence" value="ECO:0000314"/>
    <property type="project" value="UniProtKB"/>
</dbReference>
<dbReference type="GO" id="GO:0007507">
    <property type="term" value="P:heart development"/>
    <property type="evidence" value="ECO:0000315"/>
    <property type="project" value="UniProtKB"/>
</dbReference>
<dbReference type="GO" id="GO:0030502">
    <property type="term" value="P:negative regulation of bone mineralization"/>
    <property type="evidence" value="ECO:0000315"/>
    <property type="project" value="UniProtKB"/>
</dbReference>
<dbReference type="GO" id="GO:0045892">
    <property type="term" value="P:negative regulation of DNA-templated transcription"/>
    <property type="evidence" value="ECO:0000314"/>
    <property type="project" value="UniProtKB"/>
</dbReference>
<dbReference type="GO" id="GO:0070171">
    <property type="term" value="P:negative regulation of tooth mineralization"/>
    <property type="evidence" value="ECO:0000315"/>
    <property type="project" value="UniProtKB"/>
</dbReference>
<dbReference type="GO" id="GO:0000122">
    <property type="term" value="P:negative regulation of transcription by RNA polymerase II"/>
    <property type="evidence" value="ECO:0000315"/>
    <property type="project" value="UniProtKB"/>
</dbReference>
<dbReference type="GO" id="GO:0042476">
    <property type="term" value="P:odontogenesis"/>
    <property type="evidence" value="ECO:0000315"/>
    <property type="project" value="UniProtKB"/>
</dbReference>
<dbReference type="GO" id="GO:0060021">
    <property type="term" value="P:roof of mouth development"/>
    <property type="evidence" value="ECO:0000315"/>
    <property type="project" value="UniProtKB"/>
</dbReference>
<dbReference type="GO" id="GO:0065001">
    <property type="term" value="P:specification of axis polarity"/>
    <property type="evidence" value="ECO:0000315"/>
    <property type="project" value="UniProtKB"/>
</dbReference>
<dbReference type="CDD" id="cd14261">
    <property type="entry name" value="PUFD"/>
    <property type="match status" value="1"/>
</dbReference>
<dbReference type="FunFam" id="1.25.40.20:FF:000032">
    <property type="entry name" value="BCL-6 corepressor isoform X1"/>
    <property type="match status" value="1"/>
</dbReference>
<dbReference type="FunFam" id="3.10.260.40:FF:000001">
    <property type="entry name" value="BCL-6 corepressor isoform X2"/>
    <property type="match status" value="1"/>
</dbReference>
<dbReference type="Gene3D" id="1.25.40.20">
    <property type="entry name" value="Ankyrin repeat-containing domain"/>
    <property type="match status" value="1"/>
</dbReference>
<dbReference type="Gene3D" id="3.10.260.40">
    <property type="entry name" value="BCL-6 corepressor, PCGF1 binding domain"/>
    <property type="match status" value="1"/>
</dbReference>
<dbReference type="IDEAL" id="IID00087"/>
<dbReference type="InterPro" id="IPR002110">
    <property type="entry name" value="Ankyrin_rpt"/>
</dbReference>
<dbReference type="InterPro" id="IPR036770">
    <property type="entry name" value="Ankyrin_rpt-contain_sf"/>
</dbReference>
<dbReference type="InterPro" id="IPR031628">
    <property type="entry name" value="BCOR"/>
</dbReference>
<dbReference type="InterPro" id="IPR047144">
    <property type="entry name" value="BCOR-like"/>
</dbReference>
<dbReference type="InterPro" id="IPR032365">
    <property type="entry name" value="PUFD"/>
</dbReference>
<dbReference type="InterPro" id="IPR038227">
    <property type="entry name" value="PUFD_som_sf"/>
</dbReference>
<dbReference type="PANTHER" id="PTHR24117">
    <property type="entry name" value="AGAP007537-PB"/>
    <property type="match status" value="1"/>
</dbReference>
<dbReference type="PANTHER" id="PTHR24117:SF8">
    <property type="entry name" value="BCL-6 COREPRESSOR"/>
    <property type="match status" value="1"/>
</dbReference>
<dbReference type="Pfam" id="PF12796">
    <property type="entry name" value="Ank_2"/>
    <property type="match status" value="1"/>
</dbReference>
<dbReference type="Pfam" id="PF15808">
    <property type="entry name" value="BCOR"/>
    <property type="match status" value="1"/>
</dbReference>
<dbReference type="Pfam" id="PF16553">
    <property type="entry name" value="PUFD"/>
    <property type="match status" value="1"/>
</dbReference>
<dbReference type="SMART" id="SM00248">
    <property type="entry name" value="ANK"/>
    <property type="match status" value="3"/>
</dbReference>
<dbReference type="SUPFAM" id="SSF48403">
    <property type="entry name" value="Ankyrin repeat"/>
    <property type="match status" value="1"/>
</dbReference>
<dbReference type="PROSITE" id="PS50297">
    <property type="entry name" value="ANK_REP_REGION"/>
    <property type="match status" value="1"/>
</dbReference>
<dbReference type="PROSITE" id="PS50088">
    <property type="entry name" value="ANK_REPEAT"/>
    <property type="match status" value="2"/>
</dbReference>
<feature type="chain" id="PRO_0000066978" description="BCL-6 corepressor">
    <location>
        <begin position="1"/>
        <end position="1755"/>
    </location>
</feature>
<feature type="repeat" description="ANK 1">
    <location>
        <begin position="1462"/>
        <end position="1495"/>
    </location>
</feature>
<feature type="repeat" description="ANK 2">
    <location>
        <begin position="1496"/>
        <end position="1525"/>
    </location>
</feature>
<feature type="repeat" description="ANK 3">
    <location>
        <begin position="1529"/>
        <end position="1558"/>
    </location>
</feature>
<feature type="region of interest" description="Disordered" evidence="2">
    <location>
        <begin position="309"/>
        <end position="345"/>
    </location>
</feature>
<feature type="region of interest" description="Disordered" evidence="2">
    <location>
        <begin position="388"/>
        <end position="438"/>
    </location>
</feature>
<feature type="region of interest" description="Interaction with BCL6">
    <location>
        <begin position="498"/>
        <end position="514"/>
    </location>
</feature>
<feature type="region of interest" description="Disordered" evidence="2">
    <location>
        <begin position="557"/>
        <end position="641"/>
    </location>
</feature>
<feature type="region of interest" description="Disordered" evidence="2">
    <location>
        <begin position="737"/>
        <end position="760"/>
    </location>
</feature>
<feature type="region of interest" description="Disordered" evidence="2">
    <location>
        <begin position="773"/>
        <end position="794"/>
    </location>
</feature>
<feature type="region of interest" description="Disordered" evidence="2">
    <location>
        <begin position="815"/>
        <end position="844"/>
    </location>
</feature>
<feature type="region of interest" description="Disordered" evidence="2">
    <location>
        <begin position="1071"/>
        <end position="1187"/>
    </location>
</feature>
<feature type="region of interest" description="Disordered" evidence="2">
    <location>
        <begin position="1220"/>
        <end position="1328"/>
    </location>
</feature>
<feature type="region of interest" description="Disordered" evidence="2">
    <location>
        <begin position="1430"/>
        <end position="1451"/>
    </location>
</feature>
<feature type="region of interest" description="Necessary and sufficient for interaction with PCGF1">
    <location>
        <begin position="1634"/>
        <end position="1748"/>
    </location>
</feature>
<feature type="compositionally biased region" description="Low complexity" evidence="2">
    <location>
        <begin position="557"/>
        <end position="578"/>
    </location>
</feature>
<feature type="compositionally biased region" description="Polar residues" evidence="2">
    <location>
        <begin position="580"/>
        <end position="594"/>
    </location>
</feature>
<feature type="compositionally biased region" description="Low complexity" evidence="2">
    <location>
        <begin position="605"/>
        <end position="620"/>
    </location>
</feature>
<feature type="compositionally biased region" description="Basic and acidic residues" evidence="2">
    <location>
        <begin position="775"/>
        <end position="785"/>
    </location>
</feature>
<feature type="compositionally biased region" description="Basic and acidic residues" evidence="2">
    <location>
        <begin position="1076"/>
        <end position="1107"/>
    </location>
</feature>
<feature type="compositionally biased region" description="Basic and acidic residues" evidence="2">
    <location>
        <begin position="1166"/>
        <end position="1175"/>
    </location>
</feature>
<feature type="compositionally biased region" description="Polar residues" evidence="2">
    <location>
        <begin position="1238"/>
        <end position="1252"/>
    </location>
</feature>
<feature type="compositionally biased region" description="Basic and acidic residues" evidence="2">
    <location>
        <begin position="1253"/>
        <end position="1279"/>
    </location>
</feature>
<feature type="compositionally biased region" description="Polar residues" evidence="2">
    <location>
        <begin position="1430"/>
        <end position="1447"/>
    </location>
</feature>
<feature type="modified residue" description="Phosphoserine" evidence="19">
    <location>
        <position position="336"/>
    </location>
</feature>
<feature type="modified residue" description="Phosphoserine" evidence="19">
    <location>
        <position position="340"/>
    </location>
</feature>
<feature type="modified residue" description="Phosphoserine" evidence="19">
    <location>
        <position position="365"/>
    </location>
</feature>
<feature type="modified residue" description="Phosphoserine" evidence="19">
    <location>
        <position position="367"/>
    </location>
</feature>
<feature type="modified residue" description="N6-acetyllysine" evidence="17">
    <location>
        <position position="392"/>
    </location>
</feature>
<feature type="modified residue" description="Phosphoserine" evidence="16 19 20 21">
    <location>
        <position position="423"/>
    </location>
</feature>
<feature type="modified residue" description="Phosphoserine" evidence="1">
    <location>
        <position position="1127"/>
    </location>
</feature>
<feature type="modified residue" description="Phosphoserine" evidence="18 21">
    <location>
        <position position="1139"/>
    </location>
</feature>
<feature type="modified residue" description="Phosphoserine" evidence="21">
    <location>
        <position position="1290"/>
    </location>
</feature>
<feature type="modified residue" description="Phosphoserine" evidence="1">
    <location>
        <position position="1345"/>
    </location>
</feature>
<feature type="modified residue" description="Phosphoserine" evidence="16 21">
    <location>
        <position position="1410"/>
    </location>
</feature>
<feature type="cross-link" description="Glycyl lysine isopeptide (Lys-Gly) (interchain with G-Cter in SUMO2)" evidence="22">
    <location>
        <position position="786"/>
    </location>
</feature>
<feature type="cross-link" description="Glycyl lysine isopeptide (Lys-Gly) (interchain with G-Cter in SUMO2)" evidence="22">
    <location>
        <position position="872"/>
    </location>
</feature>
<feature type="cross-link" description="Glycyl lysine isopeptide (Lys-Gly) (interchain with G-Cter in SUMO2)" evidence="22">
    <location>
        <position position="1256"/>
    </location>
</feature>
<feature type="cross-link" description="Glycyl lysine isopeptide (Lys-Gly) (interchain with G-Cter in SUMO2)" evidence="22">
    <location>
        <position position="1413"/>
    </location>
</feature>
<feature type="splice variant" id="VSP_012555" description="In isoform 4." evidence="13 14">
    <location>
        <begin position="1000"/>
        <end position="1017"/>
    </location>
</feature>
<feature type="splice variant" id="VSP_012554" description="In isoform 3." evidence="11 12">
    <original>MEGLQ</original>
    <variation>VSPPT</variation>
    <location>
        <begin position="1000"/>
        <end position="1004"/>
    </location>
</feature>
<feature type="splice variant" id="VSP_012556" description="In isoform 3." evidence="11 12">
    <location>
        <begin position="1005"/>
        <end position="1755"/>
    </location>
</feature>
<feature type="splice variant" id="VSP_012557" description="In isoform 2 and isoform 4." evidence="11 13 14">
    <location>
        <begin position="1168"/>
        <end position="1201"/>
    </location>
</feature>
<feature type="sequence variant" id="VAR_020921" description="In MCOPS2; dbSNP:rs121434618." evidence="4">
    <original>P</original>
    <variation>L</variation>
    <location>
        <position position="85"/>
    </location>
</feature>
<feature type="mutagenesis site" description="Abolishes interaction with BCL6 and inhibits BCL6 corepression activity; when associated with A-509 and A-511." evidence="6">
    <original>S</original>
    <variation>A</variation>
    <location>
        <position position="507"/>
    </location>
</feature>
<feature type="mutagenesis site" description="Diminishes interaction with BCL6." evidence="6">
    <original>S</original>
    <variation>A</variation>
    <location>
        <position position="508"/>
    </location>
</feature>
<feature type="mutagenesis site" description="Abolishes interaction with BCL6 and inhibits BCL6 corepression activity; when associated with A-507 and A-511." evidence="6">
    <original>W</original>
    <variation>A</variation>
    <location>
        <position position="509"/>
    </location>
</feature>
<feature type="mutagenesis site" description="Abolishes interaction with BCL6 and inhibits BCL6 corepression activity; when associated with A-507 and A-509." evidence="6">
    <original>V</original>
    <variation>A</variation>
    <location>
        <position position="511"/>
    </location>
</feature>
<feature type="mutagenesis site" description="Slightly inhibits interaction with PCGF1." evidence="8">
    <original>L</original>
    <variation>D</variation>
    <variation>R</variation>
    <location>
        <position position="1706"/>
    </location>
</feature>
<feature type="sequence conflict" description="In Ref. 6; BAB85037." evidence="15" ref="6">
    <original>V</original>
    <variation>A</variation>
    <location>
        <position position="406"/>
    </location>
</feature>
<feature type="sequence conflict" description="In Ref. 6; BAB85037." evidence="15" ref="6">
    <original>Q</original>
    <variation>L</variation>
    <location>
        <position position="596"/>
    </location>
</feature>
<feature type="sequence conflict" description="In Ref. 6; BAA91061." evidence="15" ref="6">
    <original>N</original>
    <variation>S</variation>
    <location>
        <position position="1459"/>
    </location>
</feature>
<feature type="sequence conflict" description="In Ref. 6; BAA91061." evidence="15" ref="6">
    <original>K</original>
    <variation>R</variation>
    <location>
        <position position="1577"/>
    </location>
</feature>
<feature type="strand" evidence="23">
    <location>
        <begin position="500"/>
        <end position="503"/>
    </location>
</feature>
<feature type="strand" evidence="25">
    <location>
        <begin position="1190"/>
        <end position="1193"/>
    </location>
</feature>
<feature type="strand" evidence="25">
    <location>
        <begin position="1195"/>
        <end position="1199"/>
    </location>
</feature>
<feature type="turn" evidence="25">
    <location>
        <begin position="1200"/>
        <end position="1202"/>
    </location>
</feature>
<feature type="strand" evidence="24">
    <location>
        <begin position="1637"/>
        <end position="1644"/>
    </location>
</feature>
<feature type="strand" evidence="24">
    <location>
        <begin position="1650"/>
        <end position="1653"/>
    </location>
</feature>
<feature type="turn" evidence="24">
    <location>
        <begin position="1656"/>
        <end position="1658"/>
    </location>
</feature>
<feature type="strand" evidence="24">
    <location>
        <begin position="1660"/>
        <end position="1665"/>
    </location>
</feature>
<feature type="helix" evidence="24">
    <location>
        <begin position="1666"/>
        <end position="1673"/>
    </location>
</feature>
<feature type="helix" evidence="24">
    <location>
        <begin position="1677"/>
        <end position="1683"/>
    </location>
</feature>
<feature type="strand" evidence="24">
    <location>
        <begin position="1689"/>
        <end position="1693"/>
    </location>
</feature>
<feature type="helix" evidence="24">
    <location>
        <begin position="1694"/>
        <end position="1702"/>
    </location>
</feature>
<feature type="helix" evidence="24">
    <location>
        <begin position="1705"/>
        <end position="1707"/>
    </location>
</feature>
<feature type="helix" evidence="24">
    <location>
        <begin position="1710"/>
        <end position="1712"/>
    </location>
</feature>
<feature type="turn" evidence="24">
    <location>
        <begin position="1713"/>
        <end position="1715"/>
    </location>
</feature>
<feature type="strand" evidence="24">
    <location>
        <begin position="1723"/>
        <end position="1728"/>
    </location>
</feature>
<feature type="helix" evidence="24">
    <location>
        <begin position="1731"/>
        <end position="1736"/>
    </location>
</feature>
<feature type="strand" evidence="24">
    <location>
        <begin position="1740"/>
        <end position="1744"/>
    </location>
</feature>
<accession>Q6W2J9</accession>
<accession>D3DWB3</accession>
<accession>D3DWB4</accession>
<accession>Q29RF6</accession>
<accession>Q6P4B6</accession>
<accession>Q7Z2K7</accession>
<accession>Q8TEB4</accession>
<accession>Q96DB3</accession>
<accession>Q9H232</accession>
<accession>Q9H233</accession>
<accession>Q9HCJ7</accession>
<accession>Q9NXF2</accession>
<gene>
    <name type="primary">BCOR</name>
    <name type="synonym">KIAA1575</name>
</gene>
<organism>
    <name type="scientific">Homo sapiens</name>
    <name type="common">Human</name>
    <dbReference type="NCBI Taxonomy" id="9606"/>
    <lineage>
        <taxon>Eukaryota</taxon>
        <taxon>Metazoa</taxon>
        <taxon>Chordata</taxon>
        <taxon>Craniata</taxon>
        <taxon>Vertebrata</taxon>
        <taxon>Euteleostomi</taxon>
        <taxon>Mammalia</taxon>
        <taxon>Eutheria</taxon>
        <taxon>Euarchontoglires</taxon>
        <taxon>Primates</taxon>
        <taxon>Haplorrhini</taxon>
        <taxon>Catarrhini</taxon>
        <taxon>Hominidae</taxon>
        <taxon>Homo</taxon>
    </lineage>
</organism>
<keyword id="KW-0002">3D-structure</keyword>
<keyword id="KW-0007">Acetylation</keyword>
<keyword id="KW-0025">Alternative splicing</keyword>
<keyword id="KW-0040">ANK repeat</keyword>
<keyword id="KW-0156">Chromatin regulator</keyword>
<keyword id="KW-0225">Disease variant</keyword>
<keyword id="KW-1017">Isopeptide bond</keyword>
<keyword id="KW-1013">Microphthalmia</keyword>
<keyword id="KW-0539">Nucleus</keyword>
<keyword id="KW-0597">Phosphoprotein</keyword>
<keyword id="KW-1267">Proteomics identification</keyword>
<keyword id="KW-1185">Reference proteome</keyword>
<keyword id="KW-0677">Repeat</keyword>
<keyword id="KW-0678">Repressor</keyword>
<keyword id="KW-0804">Transcription</keyword>
<keyword id="KW-0805">Transcription regulation</keyword>
<keyword id="KW-0832">Ubl conjugation</keyword>